<accession>Q6MY48</accession>
<accession>Q4WS09</accession>
<proteinExistence type="inferred from homology"/>
<reference key="1">
    <citation type="journal article" date="2004" name="Fungal Genet. Biol.">
        <title>Insight into the genome of Aspergillus fumigatus: analysis of a 922 kb region encompassing the nitrate assimilation gene cluster.</title>
        <authorList>
            <person name="Pain A."/>
            <person name="Woodward J.R."/>
            <person name="Quail M.A."/>
            <person name="Anderson M.J."/>
            <person name="Clark R."/>
            <person name="Collins M."/>
            <person name="Fosker N."/>
            <person name="Fraser A."/>
            <person name="Harris D.E."/>
            <person name="Larke N."/>
            <person name="Murphy L.D."/>
            <person name="Humphray S."/>
            <person name="O'Neil S."/>
            <person name="Pertea M."/>
            <person name="Price C."/>
            <person name="Rabbinowitsch E."/>
            <person name="Rajandream M.A."/>
            <person name="Salzberg S.L."/>
            <person name="Saunders D."/>
            <person name="Seeger K."/>
            <person name="Sharp S."/>
            <person name="Warren T."/>
            <person name="Denning D.W."/>
            <person name="Barrell B.G."/>
            <person name="Hall N."/>
        </authorList>
    </citation>
    <scope>NUCLEOTIDE SEQUENCE [LARGE SCALE GENOMIC DNA]</scope>
    <source>
        <strain>ATCC MYA-4609 / CBS 101355 / FGSC A1100 / Af293</strain>
    </source>
</reference>
<reference key="2">
    <citation type="journal article" date="2005" name="Nature">
        <title>Genomic sequence of the pathogenic and allergenic filamentous fungus Aspergillus fumigatus.</title>
        <authorList>
            <person name="Nierman W.C."/>
            <person name="Pain A."/>
            <person name="Anderson M.J."/>
            <person name="Wortman J.R."/>
            <person name="Kim H.S."/>
            <person name="Arroyo J."/>
            <person name="Berriman M."/>
            <person name="Abe K."/>
            <person name="Archer D.B."/>
            <person name="Bermejo C."/>
            <person name="Bennett J.W."/>
            <person name="Bowyer P."/>
            <person name="Chen D."/>
            <person name="Collins M."/>
            <person name="Coulsen R."/>
            <person name="Davies R."/>
            <person name="Dyer P.S."/>
            <person name="Farman M.L."/>
            <person name="Fedorova N."/>
            <person name="Fedorova N.D."/>
            <person name="Feldblyum T.V."/>
            <person name="Fischer R."/>
            <person name="Fosker N."/>
            <person name="Fraser A."/>
            <person name="Garcia J.L."/>
            <person name="Garcia M.J."/>
            <person name="Goble A."/>
            <person name="Goldman G.H."/>
            <person name="Gomi K."/>
            <person name="Griffith-Jones S."/>
            <person name="Gwilliam R."/>
            <person name="Haas B.J."/>
            <person name="Haas H."/>
            <person name="Harris D.E."/>
            <person name="Horiuchi H."/>
            <person name="Huang J."/>
            <person name="Humphray S."/>
            <person name="Jimenez J."/>
            <person name="Keller N."/>
            <person name="Khouri H."/>
            <person name="Kitamoto K."/>
            <person name="Kobayashi T."/>
            <person name="Konzack S."/>
            <person name="Kulkarni R."/>
            <person name="Kumagai T."/>
            <person name="Lafton A."/>
            <person name="Latge J.-P."/>
            <person name="Li W."/>
            <person name="Lord A."/>
            <person name="Lu C."/>
            <person name="Majoros W.H."/>
            <person name="May G.S."/>
            <person name="Miller B.L."/>
            <person name="Mohamoud Y."/>
            <person name="Molina M."/>
            <person name="Monod M."/>
            <person name="Mouyna I."/>
            <person name="Mulligan S."/>
            <person name="Murphy L.D."/>
            <person name="O'Neil S."/>
            <person name="Paulsen I."/>
            <person name="Penalva M.A."/>
            <person name="Pertea M."/>
            <person name="Price C."/>
            <person name="Pritchard B.L."/>
            <person name="Quail M.A."/>
            <person name="Rabbinowitsch E."/>
            <person name="Rawlins N."/>
            <person name="Rajandream M.A."/>
            <person name="Reichard U."/>
            <person name="Renauld H."/>
            <person name="Robson G.D."/>
            <person name="Rodriguez de Cordoba S."/>
            <person name="Rodriguez-Pena J.M."/>
            <person name="Ronning C.M."/>
            <person name="Rutter S."/>
            <person name="Salzberg S.L."/>
            <person name="Sanchez M."/>
            <person name="Sanchez-Ferrero J.C."/>
            <person name="Saunders D."/>
            <person name="Seeger K."/>
            <person name="Squares R."/>
            <person name="Squares S."/>
            <person name="Takeuchi M."/>
            <person name="Tekaia F."/>
            <person name="Turner G."/>
            <person name="Vazquez de Aldana C.R."/>
            <person name="Weidman J."/>
            <person name="White O."/>
            <person name="Woodward J.R."/>
            <person name="Yu J.-H."/>
            <person name="Fraser C.M."/>
            <person name="Galagan J.E."/>
            <person name="Asai K."/>
            <person name="Machida M."/>
            <person name="Hall N."/>
            <person name="Barrell B.G."/>
            <person name="Denning D.W."/>
        </authorList>
    </citation>
    <scope>NUCLEOTIDE SEQUENCE [LARGE SCALE GENOMIC DNA]</scope>
    <source>
        <strain>ATCC MYA-4609 / CBS 101355 / FGSC A1100 / Af293</strain>
    </source>
</reference>
<dbReference type="EMBL" id="BX649607">
    <property type="protein sequence ID" value="CAF32155.1"/>
    <property type="molecule type" value="Genomic_DNA"/>
</dbReference>
<dbReference type="EMBL" id="AAHF01000004">
    <property type="protein sequence ID" value="EAL90773.1"/>
    <property type="molecule type" value="Genomic_DNA"/>
</dbReference>
<dbReference type="RefSeq" id="XP_752811.1">
    <property type="nucleotide sequence ID" value="XM_747718.1"/>
</dbReference>
<dbReference type="SMR" id="Q6MY48"/>
<dbReference type="FunCoup" id="Q6MY48">
    <property type="interactions" value="978"/>
</dbReference>
<dbReference type="STRING" id="330879.Q6MY48"/>
<dbReference type="SwissPalm" id="Q6MY48"/>
<dbReference type="EnsemblFungi" id="EAL90773">
    <property type="protein sequence ID" value="EAL90773"/>
    <property type="gene ID" value="AFUA_1G14410"/>
</dbReference>
<dbReference type="GeneID" id="3509833"/>
<dbReference type="KEGG" id="afm:AFUA_1G14410"/>
<dbReference type="eggNOG" id="KOG3353">
    <property type="taxonomic scope" value="Eukaryota"/>
</dbReference>
<dbReference type="HOGENOM" id="CLU_083987_0_0_1"/>
<dbReference type="InParanoid" id="Q6MY48"/>
<dbReference type="OMA" id="NTYETAR"/>
<dbReference type="OrthoDB" id="10254664at2759"/>
<dbReference type="Proteomes" id="UP000002530">
    <property type="component" value="Chromosome 1"/>
</dbReference>
<dbReference type="GO" id="GO:0022625">
    <property type="term" value="C:cytosolic large ribosomal subunit"/>
    <property type="evidence" value="ECO:0000318"/>
    <property type="project" value="GO_Central"/>
</dbReference>
<dbReference type="GO" id="GO:0003735">
    <property type="term" value="F:structural constituent of ribosome"/>
    <property type="evidence" value="ECO:0000318"/>
    <property type="project" value="GO_Central"/>
</dbReference>
<dbReference type="GO" id="GO:0002181">
    <property type="term" value="P:cytoplasmic translation"/>
    <property type="evidence" value="ECO:0000318"/>
    <property type="project" value="GO_Central"/>
</dbReference>
<dbReference type="CDD" id="cd00336">
    <property type="entry name" value="Ribosomal_L22"/>
    <property type="match status" value="1"/>
</dbReference>
<dbReference type="FunFam" id="3.90.470.10:FF:000010">
    <property type="entry name" value="60S ribosomal protein L17"/>
    <property type="match status" value="1"/>
</dbReference>
<dbReference type="Gene3D" id="3.90.470.10">
    <property type="entry name" value="Ribosomal protein L22/L17"/>
    <property type="match status" value="1"/>
</dbReference>
<dbReference type="InterPro" id="IPR001063">
    <property type="entry name" value="Ribosomal_uL22"/>
</dbReference>
<dbReference type="InterPro" id="IPR018260">
    <property type="entry name" value="Ribosomal_uL22_CS"/>
</dbReference>
<dbReference type="InterPro" id="IPR005721">
    <property type="entry name" value="Ribosomal_uL22_euk/arc"/>
</dbReference>
<dbReference type="InterPro" id="IPR036394">
    <property type="entry name" value="Ribosomal_uL22_sf"/>
</dbReference>
<dbReference type="NCBIfam" id="TIGR01038">
    <property type="entry name" value="uL22_arch_euk"/>
    <property type="match status" value="1"/>
</dbReference>
<dbReference type="PANTHER" id="PTHR11593">
    <property type="entry name" value="60S RIBOSOMAL PROTEIN L17"/>
    <property type="match status" value="1"/>
</dbReference>
<dbReference type="PANTHER" id="PTHR11593:SF10">
    <property type="entry name" value="60S RIBOSOMAL PROTEIN L17"/>
    <property type="match status" value="1"/>
</dbReference>
<dbReference type="Pfam" id="PF00237">
    <property type="entry name" value="Ribosomal_L22"/>
    <property type="match status" value="1"/>
</dbReference>
<dbReference type="SUPFAM" id="SSF54843">
    <property type="entry name" value="Ribosomal protein L22"/>
    <property type="match status" value="1"/>
</dbReference>
<dbReference type="PROSITE" id="PS00464">
    <property type="entry name" value="RIBOSOMAL_L22"/>
    <property type="match status" value="1"/>
</dbReference>
<organism>
    <name type="scientific">Aspergillus fumigatus (strain ATCC MYA-4609 / CBS 101355 / FGSC A1100 / Af293)</name>
    <name type="common">Neosartorya fumigata</name>
    <dbReference type="NCBI Taxonomy" id="330879"/>
    <lineage>
        <taxon>Eukaryota</taxon>
        <taxon>Fungi</taxon>
        <taxon>Dikarya</taxon>
        <taxon>Ascomycota</taxon>
        <taxon>Pezizomycotina</taxon>
        <taxon>Eurotiomycetes</taxon>
        <taxon>Eurotiomycetidae</taxon>
        <taxon>Eurotiales</taxon>
        <taxon>Aspergillaceae</taxon>
        <taxon>Aspergillus</taxon>
        <taxon>Aspergillus subgen. Fumigati</taxon>
    </lineage>
</organism>
<feature type="chain" id="PRO_0000125341" description="Large ribosomal subunit protein uL22">
    <location>
        <begin position="1"/>
        <end position="194"/>
    </location>
</feature>
<evidence type="ECO:0000305" key="1"/>
<protein>
    <recommendedName>
        <fullName evidence="1">Large ribosomal subunit protein uL22</fullName>
    </recommendedName>
    <alternativeName>
        <fullName>60S ribosomal protein L17</fullName>
    </alternativeName>
</protein>
<gene>
    <name type="primary">rpl17</name>
    <name type="ORF">AfA10A1.065</name>
    <name type="ORF">AFUA_1G14410</name>
</gene>
<sequence length="194" mass="21666">MLGLCLHQVRYAAQDIPAAKSARARGSYLRVSFKNTRETAQAINGMKLQRALAFLENVKNKTEVVPFRRYAGSIGRTAQGKQWGVSKARWPVKSAQFLLDLLKNAEANADTKGLDTGNLIVKHIQVNQAPKGRRRTYRAHGRINPYMTNPCHIELILTEGEETVQKAPQVVKKEGAHLSSRQRGAQIRRALIEA</sequence>
<name>RL17_ASPFU</name>
<keyword id="KW-1185">Reference proteome</keyword>
<keyword id="KW-0687">Ribonucleoprotein</keyword>
<keyword id="KW-0689">Ribosomal protein</keyword>
<comment type="similarity">
    <text evidence="1">Belongs to the universal ribosomal protein uL22 family.</text>
</comment>